<feature type="chain" id="PRO_0000379401" description="ATP-dependent helicase/deoxyribonuclease subunit B">
    <location>
        <begin position="1"/>
        <end position="1071"/>
    </location>
</feature>
<feature type="sequence conflict" description="In Ref. 2; AAZ51212." evidence="2" ref="2">
    <original>Q</original>
    <variation>K</variation>
    <location>
        <position position="142"/>
    </location>
</feature>
<accession>Q9A0H4</accession>
<accession>Q48ZK6</accession>
<comment type="function">
    <text evidence="1">The heterodimer acts as both an ATP-dependent DNA helicase and an ATP-dependent, dual-direction single-stranded exonuclease. Recognizes the chi site generating a DNA molecule suitable for the initiation of homologous recombination. This subunit has 5' -&gt; 3' nuclease activity but not helicase activity.</text>
</comment>
<comment type="cofactor">
    <cofactor evidence="1">
        <name>Mg(2+)</name>
        <dbReference type="ChEBI" id="CHEBI:18420"/>
    </cofactor>
</comment>
<comment type="subunit">
    <text evidence="1">Heterodimer of AddA and RexB.</text>
</comment>
<comment type="miscellaneous">
    <text evidence="1">Despite having helicase-like domains, this subunit does not have helicase activity.</text>
</comment>
<comment type="similarity">
    <text evidence="1">Belongs to the helicase family. AddB/RexB type 2 subfamily.</text>
</comment>
<keyword id="KW-0067">ATP-binding</keyword>
<keyword id="KW-0227">DNA damage</keyword>
<keyword id="KW-0234">DNA repair</keyword>
<keyword id="KW-0238">DNA-binding</keyword>
<keyword id="KW-0269">Exonuclease</keyword>
<keyword id="KW-0347">Helicase</keyword>
<keyword id="KW-0378">Hydrolase</keyword>
<keyword id="KW-0540">Nuclease</keyword>
<keyword id="KW-0547">Nucleotide-binding</keyword>
<keyword id="KW-1185">Reference proteome</keyword>
<gene>
    <name evidence="1" type="primary">rexB</name>
    <name type="ordered locus">SPy_0776</name>
    <name type="ordered locus">M5005_Spy0594</name>
</gene>
<dbReference type="EC" id="3.1.-.-" evidence="1"/>
<dbReference type="EMBL" id="AE004092">
    <property type="protein sequence ID" value="AAK33716.1"/>
    <property type="molecule type" value="Genomic_DNA"/>
</dbReference>
<dbReference type="EMBL" id="CP000017">
    <property type="protein sequence ID" value="AAZ51212.1"/>
    <property type="molecule type" value="Genomic_DNA"/>
</dbReference>
<dbReference type="RefSeq" id="NP_268995.1">
    <property type="nucleotide sequence ID" value="NC_002737.2"/>
</dbReference>
<dbReference type="SMR" id="Q9A0H4"/>
<dbReference type="PaxDb" id="1314-HKU360_00605"/>
<dbReference type="KEGG" id="spy:SPy_0776"/>
<dbReference type="KEGG" id="spz:M5005_Spy0594"/>
<dbReference type="PATRIC" id="fig|160490.10.peg.662"/>
<dbReference type="HOGENOM" id="CLU_007838_1_0_9"/>
<dbReference type="OMA" id="IVPNHIK"/>
<dbReference type="Proteomes" id="UP000000750">
    <property type="component" value="Chromosome"/>
</dbReference>
<dbReference type="GO" id="GO:0008409">
    <property type="term" value="F:5'-3' exonuclease activity"/>
    <property type="evidence" value="ECO:0007669"/>
    <property type="project" value="UniProtKB-UniRule"/>
</dbReference>
<dbReference type="GO" id="GO:0005524">
    <property type="term" value="F:ATP binding"/>
    <property type="evidence" value="ECO:0007669"/>
    <property type="project" value="UniProtKB-UniRule"/>
</dbReference>
<dbReference type="GO" id="GO:0003690">
    <property type="term" value="F:double-stranded DNA binding"/>
    <property type="evidence" value="ECO:0007669"/>
    <property type="project" value="UniProtKB-UniRule"/>
</dbReference>
<dbReference type="GO" id="GO:0004386">
    <property type="term" value="F:helicase activity"/>
    <property type="evidence" value="ECO:0007669"/>
    <property type="project" value="UniProtKB-KW"/>
</dbReference>
<dbReference type="GO" id="GO:0016817">
    <property type="term" value="F:hydrolase activity, acting on acid anhydrides"/>
    <property type="evidence" value="ECO:0007669"/>
    <property type="project" value="InterPro"/>
</dbReference>
<dbReference type="GO" id="GO:0000724">
    <property type="term" value="P:double-strand break repair via homologous recombination"/>
    <property type="evidence" value="ECO:0007669"/>
    <property type="project" value="UniProtKB-UniRule"/>
</dbReference>
<dbReference type="Gene3D" id="3.90.320.10">
    <property type="match status" value="1"/>
</dbReference>
<dbReference type="Gene3D" id="3.40.50.300">
    <property type="entry name" value="P-loop containing nucleotide triphosphate hydrolases"/>
    <property type="match status" value="3"/>
</dbReference>
<dbReference type="HAMAP" id="MF_01453">
    <property type="entry name" value="AddB_type2"/>
    <property type="match status" value="1"/>
</dbReference>
<dbReference type="InterPro" id="IPR049035">
    <property type="entry name" value="ADDB_N"/>
</dbReference>
<dbReference type="InterPro" id="IPR014141">
    <property type="entry name" value="DNA_helicase_suRexB"/>
</dbReference>
<dbReference type="InterPro" id="IPR027417">
    <property type="entry name" value="P-loop_NTPase"/>
</dbReference>
<dbReference type="InterPro" id="IPR011604">
    <property type="entry name" value="PDDEXK-like_dom_sf"/>
</dbReference>
<dbReference type="InterPro" id="IPR038726">
    <property type="entry name" value="PDDEXK_AddAB-type"/>
</dbReference>
<dbReference type="InterPro" id="IPR011335">
    <property type="entry name" value="Restrct_endonuc-II-like"/>
</dbReference>
<dbReference type="NCBIfam" id="TIGR02774">
    <property type="entry name" value="rexB_recomb"/>
    <property type="match status" value="1"/>
</dbReference>
<dbReference type="PANTHER" id="PTHR30591">
    <property type="entry name" value="RECBCD ENZYME SUBUNIT RECC"/>
    <property type="match status" value="1"/>
</dbReference>
<dbReference type="PANTHER" id="PTHR30591:SF1">
    <property type="entry name" value="RECBCD ENZYME SUBUNIT RECC"/>
    <property type="match status" value="1"/>
</dbReference>
<dbReference type="Pfam" id="PF21445">
    <property type="entry name" value="ADDB_N"/>
    <property type="match status" value="1"/>
</dbReference>
<dbReference type="Pfam" id="PF12705">
    <property type="entry name" value="PDDEXK_1"/>
    <property type="match status" value="1"/>
</dbReference>
<dbReference type="SUPFAM" id="SSF52540">
    <property type="entry name" value="P-loop containing nucleoside triphosphate hydrolases"/>
    <property type="match status" value="1"/>
</dbReference>
<dbReference type="SUPFAM" id="SSF52980">
    <property type="entry name" value="Restriction endonuclease-like"/>
    <property type="match status" value="1"/>
</dbReference>
<proteinExistence type="inferred from homology"/>
<organism>
    <name type="scientific">Streptococcus pyogenes serotype M1</name>
    <dbReference type="NCBI Taxonomy" id="301447"/>
    <lineage>
        <taxon>Bacteria</taxon>
        <taxon>Bacillati</taxon>
        <taxon>Bacillota</taxon>
        <taxon>Bacilli</taxon>
        <taxon>Lactobacillales</taxon>
        <taxon>Streptococcaceae</taxon>
        <taxon>Streptococcus</taxon>
    </lineage>
</organism>
<reference key="1">
    <citation type="journal article" date="2001" name="Proc. Natl. Acad. Sci. U.S.A.">
        <title>Complete genome sequence of an M1 strain of Streptococcus pyogenes.</title>
        <authorList>
            <person name="Ferretti J.J."/>
            <person name="McShan W.M."/>
            <person name="Ajdic D.J."/>
            <person name="Savic D.J."/>
            <person name="Savic G."/>
            <person name="Lyon K."/>
            <person name="Primeaux C."/>
            <person name="Sezate S."/>
            <person name="Suvorov A.N."/>
            <person name="Kenton S."/>
            <person name="Lai H.S."/>
            <person name="Lin S.P."/>
            <person name="Qian Y."/>
            <person name="Jia H.G."/>
            <person name="Najar F.Z."/>
            <person name="Ren Q."/>
            <person name="Zhu H."/>
            <person name="Song L."/>
            <person name="White J."/>
            <person name="Yuan X."/>
            <person name="Clifton S.W."/>
            <person name="Roe B.A."/>
            <person name="McLaughlin R.E."/>
        </authorList>
    </citation>
    <scope>NUCLEOTIDE SEQUENCE [LARGE SCALE GENOMIC DNA]</scope>
    <source>
        <strain>ATCC 700294 / SF370 / Serotype M1</strain>
    </source>
</reference>
<reference key="2">
    <citation type="journal article" date="2005" name="J. Infect. Dis.">
        <title>Evolutionary origin and emergence of a highly successful clone of serotype M1 group A Streptococcus involved multiple horizontal gene transfer events.</title>
        <authorList>
            <person name="Sumby P."/>
            <person name="Porcella S.F."/>
            <person name="Madrigal A.G."/>
            <person name="Barbian K.D."/>
            <person name="Virtaneva K."/>
            <person name="Ricklefs S.M."/>
            <person name="Sturdevant D.E."/>
            <person name="Graham M.R."/>
            <person name="Vuopio-Varkila J."/>
            <person name="Hoe N.P."/>
            <person name="Musser J.M."/>
        </authorList>
    </citation>
    <scope>NUCLEOTIDE SEQUENCE [LARGE SCALE GENOMIC DNA]</scope>
    <source>
        <strain>ATCC BAA-947 / MGAS5005 / Serotype M1</strain>
    </source>
</reference>
<sequence length="1071" mass="124158">MKLIYTEMSYSMTEILVNEARKAADQGYRVFYIAPNSLSFEKEREVLTLLPERGTFSIIVTRFVQMSRYFTVESSPSKQHLDDTTLAMIFYRALMQLKPEDLPSYGRLQNNSVFIEQLVELYKELKNAQLSVHDLTGLDHPQKQEDLIKIIELAETIMIQQDYNQDSPLQSFARAIKLGLLNNQLSKTVVVIDGFSRFSAEEDYLLSLLNNNCQEVIIGSYVSQKAYQKSFIKGNIYEASLHFLQDLAQKYHIKPVFATSNQVFKPAFSRLTQLFEATHDFSQVDWQLQKSDLDHFSLWQCHHQKEEIEHVAKSIRQKLYEGYRYKDILVLLGDMDAYQLQIGPIFDKFEIPYYLGKAEPMAAHPLVQFIESLERSQRYNWRREDILNMLKSGLFGCFDDSDIDRFEEYTQFADIKGFTKFSKPFTINSSRQYPLDFLNEMRQDIVLPLQELFKSQKQLGASLVDKLILFLKKIRLAENMQGLAQSQLEVEKNEEVWKRFTDILTSFHHIFGQEKLRLSDCLALIKTGMKSAQYRVVPATLDVVTIKSYDLVQPHSKPFVYAIGLTQSHFPKQIHHSGLLSDQERARINEIRNYRHFDIASAENSKKNHQTALSLFNAATKELVLSVSTVINETFDDLSPYLKELINFGLPLLDKGKNYLSYDNSDIGNYKALLSQIIAINRQDLIEMSDQDKMFWTVVLRYLRKQLRKQQLELPTSDYRLSTKPLSKEVIEVCFPKGIPLKLSATALTVFYNNQYNYFLKYVLNLNKTESIHPDSRIHGQYLHRVFERLMKDHTQEPFDNKLKQAIYHTNQESFFQQVYQDNAEAEYSLAILEDIVRSTAPILQLNQNIQVIDQEKNFQLDMGNEILVHGIIDRIDQLSDGSLGIVDYKSSANQFDIGTFYNGLSPQLMTYLAALKQIAPHDINQLFGAMYLHLQDPKLDLVTFKQIDNTLVESIYKALTYKGIFSEVEKEHLSTGAYQTKNALYSNDELETLLNYNKYLYLKAAKHIKKGHFLINPYTSDGKTVQGDQLKAITRFEADLDMGQARRLVTLPAKEKKECFLTLMRKESHL</sequence>
<protein>
    <recommendedName>
        <fullName evidence="1">ATP-dependent helicase/deoxyribonuclease subunit B</fullName>
        <ecNumber evidence="1">3.1.-.-</ecNumber>
    </recommendedName>
    <alternativeName>
        <fullName evidence="1">ATP-dependent helicase/nuclease subunit RexB</fullName>
    </alternativeName>
</protein>
<name>ADDB_STRP1</name>
<evidence type="ECO:0000255" key="1">
    <source>
        <dbReference type="HAMAP-Rule" id="MF_01453"/>
    </source>
</evidence>
<evidence type="ECO:0000305" key="2"/>